<keyword id="KW-0150">Chloroplast</keyword>
<keyword id="KW-0934">Plastid</keyword>
<keyword id="KW-0687">Ribonucleoprotein</keyword>
<keyword id="KW-0689">Ribosomal protein</keyword>
<keyword id="KW-0694">RNA-binding</keyword>
<keyword id="KW-0699">rRNA-binding</keyword>
<feature type="chain" id="PRO_0000276609" description="Small ribosomal subunit protein uS12cz/uS12cy">
    <location>
        <begin position="1"/>
        <end position="123"/>
    </location>
</feature>
<organism>
    <name type="scientific">Daucus carota</name>
    <name type="common">Wild carrot</name>
    <dbReference type="NCBI Taxonomy" id="4039"/>
    <lineage>
        <taxon>Eukaryota</taxon>
        <taxon>Viridiplantae</taxon>
        <taxon>Streptophyta</taxon>
        <taxon>Embryophyta</taxon>
        <taxon>Tracheophyta</taxon>
        <taxon>Spermatophyta</taxon>
        <taxon>Magnoliopsida</taxon>
        <taxon>eudicotyledons</taxon>
        <taxon>Gunneridae</taxon>
        <taxon>Pentapetalae</taxon>
        <taxon>asterids</taxon>
        <taxon>campanulids</taxon>
        <taxon>Apiales</taxon>
        <taxon>Apiaceae</taxon>
        <taxon>Apioideae</taxon>
        <taxon>Scandiceae</taxon>
        <taxon>Daucinae</taxon>
        <taxon>Daucus</taxon>
        <taxon>Daucus sect. Daucus</taxon>
    </lineage>
</organism>
<geneLocation type="chloroplast"/>
<protein>
    <recommendedName>
        <fullName evidence="2">Small ribosomal subunit protein uS12cz/uS12cy</fullName>
    </recommendedName>
    <alternativeName>
        <fullName evidence="3">30S ribosomal protein S12, chloroplastic</fullName>
    </alternativeName>
</protein>
<name>RR12_DAUCA</name>
<accession>Q0G9T8</accession>
<proteinExistence type="inferred from homology"/>
<comment type="function">
    <text evidence="1">With S4 and S5 plays an important role in translational accuracy. Located at the interface of the 30S and 50S subunits (By similarity).</text>
</comment>
<comment type="subunit">
    <text evidence="1">Part of the 30S ribosomal subunit.</text>
</comment>
<comment type="subcellular location">
    <subcellularLocation>
        <location>Plastid</location>
        <location>Chloroplast</location>
    </subcellularLocation>
</comment>
<comment type="similarity">
    <text evidence="3">Belongs to the universal ribosomal protein uS12 family.</text>
</comment>
<gene>
    <name type="primary">rps12-A</name>
</gene>
<gene>
    <name type="primary">rps12-B</name>
</gene>
<reference key="1">
    <citation type="journal article" date="2006" name="BMC Genomics">
        <title>Complete plastid genome sequence of Daucus carota: implications for biotechnology and phylogeny of angiosperms.</title>
        <authorList>
            <person name="Ruhlman T."/>
            <person name="Lee S.-B."/>
            <person name="Jansen R.K."/>
            <person name="Hostetler J.B."/>
            <person name="Tallon L.J."/>
            <person name="Town C.D."/>
            <person name="Daniell H."/>
        </authorList>
    </citation>
    <scope>NUCLEOTIDE SEQUENCE [LARGE SCALE GENOMIC DNA]</scope>
    <source>
        <strain>cv. Danvers Half-long</strain>
    </source>
</reference>
<sequence length="123" mass="13738">MPTIKQLIRNTRQPIRNVTKSPALRGCPQRRGTCTRVYTITPKKPNSALRKVARVRLTSGFEITAYIPGIGHNSQEHSVVLVRGGRVKDLPGVRYHIVRGTLDAVGVKDRQQGRSKYGVKKPK</sequence>
<dbReference type="EMBL" id="DQ898156">
    <property type="protein sequence ID" value="ABI32470.1"/>
    <property type="molecule type" value="Genomic_DNA"/>
</dbReference>
<dbReference type="EMBL" id="DQ898156">
    <property type="protein sequence ID" value="ABI32483.1"/>
    <property type="molecule type" value="Genomic_DNA"/>
</dbReference>
<dbReference type="SMR" id="Q0G9T8"/>
<dbReference type="OMA" id="FEISTCI"/>
<dbReference type="GO" id="GO:0009507">
    <property type="term" value="C:chloroplast"/>
    <property type="evidence" value="ECO:0007669"/>
    <property type="project" value="UniProtKB-SubCell"/>
</dbReference>
<dbReference type="GO" id="GO:0015935">
    <property type="term" value="C:small ribosomal subunit"/>
    <property type="evidence" value="ECO:0007669"/>
    <property type="project" value="InterPro"/>
</dbReference>
<dbReference type="GO" id="GO:0019843">
    <property type="term" value="F:rRNA binding"/>
    <property type="evidence" value="ECO:0007669"/>
    <property type="project" value="UniProtKB-UniRule"/>
</dbReference>
<dbReference type="GO" id="GO:0003735">
    <property type="term" value="F:structural constituent of ribosome"/>
    <property type="evidence" value="ECO:0007669"/>
    <property type="project" value="InterPro"/>
</dbReference>
<dbReference type="GO" id="GO:0006412">
    <property type="term" value="P:translation"/>
    <property type="evidence" value="ECO:0007669"/>
    <property type="project" value="UniProtKB-UniRule"/>
</dbReference>
<dbReference type="CDD" id="cd03368">
    <property type="entry name" value="Ribosomal_S12"/>
    <property type="match status" value="1"/>
</dbReference>
<dbReference type="FunFam" id="2.40.50.140:FF:000008">
    <property type="entry name" value="30S ribosomal protein S12, chloroplastic"/>
    <property type="match status" value="1"/>
</dbReference>
<dbReference type="Gene3D" id="2.40.50.140">
    <property type="entry name" value="Nucleic acid-binding proteins"/>
    <property type="match status" value="1"/>
</dbReference>
<dbReference type="HAMAP" id="MF_00403_B">
    <property type="entry name" value="Ribosomal_uS12_B"/>
    <property type="match status" value="1"/>
</dbReference>
<dbReference type="InterPro" id="IPR012340">
    <property type="entry name" value="NA-bd_OB-fold"/>
</dbReference>
<dbReference type="InterPro" id="IPR006032">
    <property type="entry name" value="Ribosomal_uS12"/>
</dbReference>
<dbReference type="InterPro" id="IPR005679">
    <property type="entry name" value="Ribosomal_uS12_bac"/>
</dbReference>
<dbReference type="NCBIfam" id="TIGR00981">
    <property type="entry name" value="rpsL_bact"/>
    <property type="match status" value="1"/>
</dbReference>
<dbReference type="PANTHER" id="PTHR11652">
    <property type="entry name" value="30S RIBOSOMAL PROTEIN S12 FAMILY MEMBER"/>
    <property type="match status" value="1"/>
</dbReference>
<dbReference type="Pfam" id="PF00164">
    <property type="entry name" value="Ribosom_S12_S23"/>
    <property type="match status" value="1"/>
</dbReference>
<dbReference type="PIRSF" id="PIRSF002133">
    <property type="entry name" value="Ribosomal_S12/S23"/>
    <property type="match status" value="1"/>
</dbReference>
<dbReference type="PRINTS" id="PR01034">
    <property type="entry name" value="RIBOSOMALS12"/>
</dbReference>
<dbReference type="SUPFAM" id="SSF50249">
    <property type="entry name" value="Nucleic acid-binding proteins"/>
    <property type="match status" value="1"/>
</dbReference>
<dbReference type="PROSITE" id="PS00055">
    <property type="entry name" value="RIBOSOMAL_S12"/>
    <property type="match status" value="1"/>
</dbReference>
<evidence type="ECO:0000250" key="1"/>
<evidence type="ECO:0000255" key="2">
    <source>
        <dbReference type="HAMAP-Rule" id="MF_00403"/>
    </source>
</evidence>
<evidence type="ECO:0000305" key="3"/>